<comment type="function">
    <text evidence="1">Carrier of the growing fatty acid chain in fatty acid biosynthesis.</text>
</comment>
<comment type="pathway">
    <text evidence="1">Lipid metabolism; fatty acid biosynthesis.</text>
</comment>
<comment type="subcellular location">
    <subcellularLocation>
        <location evidence="1">Cytoplasm</location>
    </subcellularLocation>
</comment>
<comment type="PTM">
    <text evidence="1">4'-phosphopantetheine is transferred from CoA to a specific serine of apo-ACP by AcpS. This modification is essential for activity because fatty acids are bound in thioester linkage to the sulfhydryl of the prosthetic group.</text>
</comment>
<comment type="similarity">
    <text evidence="1">Belongs to the acyl carrier protein (ACP) family.</text>
</comment>
<dbReference type="EMBL" id="CP000487">
    <property type="protein sequence ID" value="ABK81892.1"/>
    <property type="molecule type" value="Genomic_DNA"/>
</dbReference>
<dbReference type="RefSeq" id="WP_002850193.1">
    <property type="nucleotide sequence ID" value="NC_008599.1"/>
</dbReference>
<dbReference type="SMR" id="A0RQM2"/>
<dbReference type="GeneID" id="61065179"/>
<dbReference type="KEGG" id="cff:CFF8240_1362"/>
<dbReference type="eggNOG" id="COG0236">
    <property type="taxonomic scope" value="Bacteria"/>
</dbReference>
<dbReference type="HOGENOM" id="CLU_108696_5_1_7"/>
<dbReference type="UniPathway" id="UPA00094"/>
<dbReference type="Proteomes" id="UP000000760">
    <property type="component" value="Chromosome"/>
</dbReference>
<dbReference type="GO" id="GO:0005829">
    <property type="term" value="C:cytosol"/>
    <property type="evidence" value="ECO:0007669"/>
    <property type="project" value="TreeGrafter"/>
</dbReference>
<dbReference type="GO" id="GO:0016020">
    <property type="term" value="C:membrane"/>
    <property type="evidence" value="ECO:0007669"/>
    <property type="project" value="GOC"/>
</dbReference>
<dbReference type="GO" id="GO:0000035">
    <property type="term" value="F:acyl binding"/>
    <property type="evidence" value="ECO:0007669"/>
    <property type="project" value="TreeGrafter"/>
</dbReference>
<dbReference type="GO" id="GO:0000036">
    <property type="term" value="F:acyl carrier activity"/>
    <property type="evidence" value="ECO:0007669"/>
    <property type="project" value="UniProtKB-UniRule"/>
</dbReference>
<dbReference type="GO" id="GO:0009245">
    <property type="term" value="P:lipid A biosynthetic process"/>
    <property type="evidence" value="ECO:0007669"/>
    <property type="project" value="TreeGrafter"/>
</dbReference>
<dbReference type="Gene3D" id="1.10.1200.10">
    <property type="entry name" value="ACP-like"/>
    <property type="match status" value="1"/>
</dbReference>
<dbReference type="HAMAP" id="MF_01217">
    <property type="entry name" value="Acyl_carrier"/>
    <property type="match status" value="1"/>
</dbReference>
<dbReference type="InterPro" id="IPR003231">
    <property type="entry name" value="ACP"/>
</dbReference>
<dbReference type="InterPro" id="IPR036736">
    <property type="entry name" value="ACP-like_sf"/>
</dbReference>
<dbReference type="InterPro" id="IPR009081">
    <property type="entry name" value="PP-bd_ACP"/>
</dbReference>
<dbReference type="InterPro" id="IPR006162">
    <property type="entry name" value="Ppantetheine_attach_site"/>
</dbReference>
<dbReference type="NCBIfam" id="TIGR00517">
    <property type="entry name" value="acyl_carrier"/>
    <property type="match status" value="1"/>
</dbReference>
<dbReference type="NCBIfam" id="NF002148">
    <property type="entry name" value="PRK00982.1-2"/>
    <property type="match status" value="1"/>
</dbReference>
<dbReference type="NCBIfam" id="NF002150">
    <property type="entry name" value="PRK00982.1-4"/>
    <property type="match status" value="1"/>
</dbReference>
<dbReference type="PANTHER" id="PTHR20863">
    <property type="entry name" value="ACYL CARRIER PROTEIN"/>
    <property type="match status" value="1"/>
</dbReference>
<dbReference type="PANTHER" id="PTHR20863:SF76">
    <property type="entry name" value="CARRIER DOMAIN-CONTAINING PROTEIN"/>
    <property type="match status" value="1"/>
</dbReference>
<dbReference type="Pfam" id="PF00550">
    <property type="entry name" value="PP-binding"/>
    <property type="match status" value="1"/>
</dbReference>
<dbReference type="SUPFAM" id="SSF47336">
    <property type="entry name" value="ACP-like"/>
    <property type="match status" value="1"/>
</dbReference>
<dbReference type="PROSITE" id="PS50075">
    <property type="entry name" value="CARRIER"/>
    <property type="match status" value="1"/>
</dbReference>
<dbReference type="PROSITE" id="PS00012">
    <property type="entry name" value="PHOSPHOPANTETHEINE"/>
    <property type="match status" value="1"/>
</dbReference>
<gene>
    <name evidence="1" type="primary">acpP</name>
    <name type="ordered locus">CFF8240_1362</name>
</gene>
<sequence length="77" mass="8482">MAVFDEVKDVVVEQLSVAPDAVKMESKIIEDLGADSLDVVELVMALEEKFEVEIPDSEAEKLISISDVVNYIDGLKK</sequence>
<reference key="1">
    <citation type="submission" date="2006-11" db="EMBL/GenBank/DDBJ databases">
        <title>Sequence of Campylobacter fetus subsp. fetus 82-40.</title>
        <authorList>
            <person name="Fouts D.E."/>
            <person name="Nelson K.E."/>
        </authorList>
    </citation>
    <scope>NUCLEOTIDE SEQUENCE [LARGE SCALE GENOMIC DNA]</scope>
    <source>
        <strain>82-40</strain>
    </source>
</reference>
<protein>
    <recommendedName>
        <fullName evidence="1">Acyl carrier protein</fullName>
        <shortName evidence="1">ACP</shortName>
    </recommendedName>
</protein>
<accession>A0RQM2</accession>
<organism>
    <name type="scientific">Campylobacter fetus subsp. fetus (strain 82-40)</name>
    <dbReference type="NCBI Taxonomy" id="360106"/>
    <lineage>
        <taxon>Bacteria</taxon>
        <taxon>Pseudomonadati</taxon>
        <taxon>Campylobacterota</taxon>
        <taxon>Epsilonproteobacteria</taxon>
        <taxon>Campylobacterales</taxon>
        <taxon>Campylobacteraceae</taxon>
        <taxon>Campylobacter</taxon>
    </lineage>
</organism>
<keyword id="KW-0963">Cytoplasm</keyword>
<keyword id="KW-0275">Fatty acid biosynthesis</keyword>
<keyword id="KW-0276">Fatty acid metabolism</keyword>
<keyword id="KW-0444">Lipid biosynthesis</keyword>
<keyword id="KW-0443">Lipid metabolism</keyword>
<keyword id="KW-0596">Phosphopantetheine</keyword>
<keyword id="KW-0597">Phosphoprotein</keyword>
<feature type="chain" id="PRO_1000066580" description="Acyl carrier protein">
    <location>
        <begin position="1"/>
        <end position="77"/>
    </location>
</feature>
<feature type="domain" description="Carrier" evidence="2">
    <location>
        <begin position="1"/>
        <end position="76"/>
    </location>
</feature>
<feature type="modified residue" description="O-(pantetheine 4'-phosphoryl)serine" evidence="2">
    <location>
        <position position="36"/>
    </location>
</feature>
<name>ACP_CAMFF</name>
<proteinExistence type="inferred from homology"/>
<evidence type="ECO:0000255" key="1">
    <source>
        <dbReference type="HAMAP-Rule" id="MF_01217"/>
    </source>
</evidence>
<evidence type="ECO:0000255" key="2">
    <source>
        <dbReference type="PROSITE-ProRule" id="PRU00258"/>
    </source>
</evidence>